<sequence length="235" mass="25663">MTQQFYVSPEQLMKDRADFARKGIARGRSVVVISCEEGIALVAENPSPSLHKIGEIYDKIAFAAVGKYNEFESLRQAGVRYADVRGYSYDREDVTARGLASVYAQSLGAVFTAEQKPFEVELAVAEVGGNQSDDHLYRLTFDGSIADEKRFIVMGGQADKVAETVEGGWQQELNFAGAIRLAMKGLVTDKEAGELPASALEVAVLDRASESTRGSRRAFRRLGDDEIAALLSKEN</sequence>
<organism>
    <name type="scientific">Arthrobacter sp. (strain FB24)</name>
    <dbReference type="NCBI Taxonomy" id="290399"/>
    <lineage>
        <taxon>Bacteria</taxon>
        <taxon>Bacillati</taxon>
        <taxon>Actinomycetota</taxon>
        <taxon>Actinomycetes</taxon>
        <taxon>Micrococcales</taxon>
        <taxon>Micrococcaceae</taxon>
        <taxon>Arthrobacter</taxon>
    </lineage>
</organism>
<evidence type="ECO:0000255" key="1">
    <source>
        <dbReference type="HAMAP-Rule" id="MF_00289"/>
    </source>
</evidence>
<dbReference type="EMBL" id="CP000454">
    <property type="protein sequence ID" value="ABK03557.1"/>
    <property type="molecule type" value="Genomic_DNA"/>
</dbReference>
<dbReference type="RefSeq" id="WP_011692023.1">
    <property type="nucleotide sequence ID" value="NC_008541.1"/>
</dbReference>
<dbReference type="SMR" id="A0JWY7"/>
<dbReference type="STRING" id="290399.Arth_2177"/>
<dbReference type="MEROPS" id="T01.980"/>
<dbReference type="KEGG" id="art:Arth_2177"/>
<dbReference type="eggNOG" id="COG0638">
    <property type="taxonomic scope" value="Bacteria"/>
</dbReference>
<dbReference type="HOGENOM" id="CLU_071031_0_0_11"/>
<dbReference type="OrthoDB" id="9775643at2"/>
<dbReference type="UniPathway" id="UPA00997"/>
<dbReference type="Proteomes" id="UP000000754">
    <property type="component" value="Chromosome"/>
</dbReference>
<dbReference type="GO" id="GO:0005737">
    <property type="term" value="C:cytoplasm"/>
    <property type="evidence" value="ECO:0007669"/>
    <property type="project" value="UniProtKB-SubCell"/>
</dbReference>
<dbReference type="GO" id="GO:0019773">
    <property type="term" value="C:proteasome core complex, alpha-subunit complex"/>
    <property type="evidence" value="ECO:0007669"/>
    <property type="project" value="UniProtKB-UniRule"/>
</dbReference>
<dbReference type="GO" id="GO:0004298">
    <property type="term" value="F:threonine-type endopeptidase activity"/>
    <property type="evidence" value="ECO:0007669"/>
    <property type="project" value="InterPro"/>
</dbReference>
<dbReference type="GO" id="GO:0019941">
    <property type="term" value="P:modification-dependent protein catabolic process"/>
    <property type="evidence" value="ECO:0007669"/>
    <property type="project" value="UniProtKB-UniRule"/>
</dbReference>
<dbReference type="GO" id="GO:0010498">
    <property type="term" value="P:proteasomal protein catabolic process"/>
    <property type="evidence" value="ECO:0007669"/>
    <property type="project" value="UniProtKB-UniRule"/>
</dbReference>
<dbReference type="Gene3D" id="3.60.20.10">
    <property type="entry name" value="Glutamine Phosphoribosylpyrophosphate, subunit 1, domain 1"/>
    <property type="match status" value="1"/>
</dbReference>
<dbReference type="HAMAP" id="MF_00289_B">
    <property type="entry name" value="Proteasome_A_B"/>
    <property type="match status" value="1"/>
</dbReference>
<dbReference type="InterPro" id="IPR029055">
    <property type="entry name" value="Ntn_hydrolases_N"/>
</dbReference>
<dbReference type="InterPro" id="IPR023332">
    <property type="entry name" value="Proteasome_alpha-type"/>
</dbReference>
<dbReference type="InterPro" id="IPR022296">
    <property type="entry name" value="Proteasome_asu_bac"/>
</dbReference>
<dbReference type="InterPro" id="IPR001353">
    <property type="entry name" value="Proteasome_sua/b"/>
</dbReference>
<dbReference type="NCBIfam" id="TIGR03691">
    <property type="entry name" value="20S_bact_alpha"/>
    <property type="match status" value="1"/>
</dbReference>
<dbReference type="Pfam" id="PF00227">
    <property type="entry name" value="Proteasome"/>
    <property type="match status" value="1"/>
</dbReference>
<dbReference type="SUPFAM" id="SSF56235">
    <property type="entry name" value="N-terminal nucleophile aminohydrolases (Ntn hydrolases)"/>
    <property type="match status" value="1"/>
</dbReference>
<dbReference type="PROSITE" id="PS51475">
    <property type="entry name" value="PROTEASOME_ALPHA_2"/>
    <property type="match status" value="1"/>
</dbReference>
<accession>A0JWY7</accession>
<protein>
    <recommendedName>
        <fullName evidence="1">Proteasome subunit alpha</fullName>
    </recommendedName>
    <alternativeName>
        <fullName evidence="1">20S proteasome alpha subunit</fullName>
    </alternativeName>
    <alternativeName>
        <fullName evidence="1">Proteasome core protein PrcA</fullName>
    </alternativeName>
</protein>
<proteinExistence type="inferred from homology"/>
<comment type="function">
    <text evidence="1">Component of the proteasome core, a large protease complex with broad specificity involved in protein degradation.</text>
</comment>
<comment type="activity regulation">
    <text evidence="1">The formation of the proteasomal ATPase ARC-20S proteasome complex, likely via the docking of the C-termini of ARC into the intersubunit pockets in the alpha-rings, may trigger opening of the gate for substrate entry. Interconversion between the open-gate and close-gate conformations leads to a dynamic regulation of the 20S proteasome proteolysis activity.</text>
</comment>
<comment type="pathway">
    <text evidence="1">Protein degradation; proteasomal Pup-dependent pathway.</text>
</comment>
<comment type="subunit">
    <text evidence="1">The 20S proteasome core is composed of 14 alpha and 14 beta subunits that assemble into four stacked heptameric rings, resulting in a barrel-shaped structure. The two inner rings, each composed of seven catalytic beta subunits, are sandwiched by two outer rings, each composed of seven alpha subunits. The catalytic chamber with the active sites is on the inside of the barrel. Has a gated structure, the ends of the cylinder being occluded by the N-termini of the alpha-subunits. Is capped by the proteasome-associated ATPase, ARC.</text>
</comment>
<comment type="subcellular location">
    <subcellularLocation>
        <location evidence="1">Cytoplasm</location>
    </subcellularLocation>
</comment>
<comment type="similarity">
    <text evidence="1">Belongs to the peptidase T1A family.</text>
</comment>
<gene>
    <name evidence="1" type="primary">prcA</name>
    <name type="ordered locus">Arth_2177</name>
</gene>
<feature type="chain" id="PRO_0000397135" description="Proteasome subunit alpha">
    <location>
        <begin position="1"/>
        <end position="235"/>
    </location>
</feature>
<reference key="1">
    <citation type="journal article" date="2013" name="Stand. Genomic Sci.">
        <title>Complete genome sequence of Arthrobacter sp. strain FB24.</title>
        <authorList>
            <person name="Nakatsu C.H."/>
            <person name="Barabote R."/>
            <person name="Thompson S."/>
            <person name="Bruce D."/>
            <person name="Detter C."/>
            <person name="Brettin T."/>
            <person name="Han C."/>
            <person name="Beasley F."/>
            <person name="Chen W."/>
            <person name="Konopka A."/>
            <person name="Xie G."/>
        </authorList>
    </citation>
    <scope>NUCLEOTIDE SEQUENCE [LARGE SCALE GENOMIC DNA]</scope>
    <source>
        <strain>FB24</strain>
    </source>
</reference>
<keyword id="KW-0963">Cytoplasm</keyword>
<keyword id="KW-0647">Proteasome</keyword>
<keyword id="KW-1185">Reference proteome</keyword>
<name>PSA_ARTS2</name>